<reference key="1">
    <citation type="journal article" date="1996" name="Science">
        <title>A subfamily of P-type ATPases with aminophospholipid transporting activity.</title>
        <authorList>
            <person name="Tang X."/>
            <person name="Halleck M.S."/>
            <person name="Schlegel R.A."/>
            <person name="Williamson P.L."/>
        </authorList>
    </citation>
    <scope>NUCLEOTIDE SEQUENCE [MRNA]</scope>
    <scope>PROTEIN SEQUENCE OF 502-678 AND 1144-1149</scope>
    <source>
        <tissue>Adrenal medulla</tissue>
    </source>
</reference>
<reference key="2">
    <citation type="journal article" date="1996" name="Science">
        <authorList>
            <person name="Tang X."/>
            <person name="Halleck M.S."/>
            <person name="Schlegel R.A."/>
            <person name="Williamson P.L."/>
        </authorList>
    </citation>
    <scope>ERRATUM OF PUBMED:8633245</scope>
</reference>
<dbReference type="EC" id="7.6.2.1" evidence="3"/>
<dbReference type="EMBL" id="U51100">
    <property type="protein sequence ID" value="AAD03352.1"/>
    <property type="molecule type" value="mRNA"/>
</dbReference>
<dbReference type="PIR" id="T18515">
    <property type="entry name" value="T18515"/>
</dbReference>
<dbReference type="RefSeq" id="NP_777263.1">
    <property type="nucleotide sequence ID" value="NM_174838.2"/>
</dbReference>
<dbReference type="SMR" id="Q29449"/>
<dbReference type="FunCoup" id="Q29449">
    <property type="interactions" value="559"/>
</dbReference>
<dbReference type="STRING" id="9913.ENSBTAP00000074315"/>
<dbReference type="TCDB" id="3.A.3.8.1">
    <property type="family name" value="the p-type atpase (p-atpase) superfamily"/>
</dbReference>
<dbReference type="PaxDb" id="9913-ENSBTAP00000014818"/>
<dbReference type="GeneID" id="317692"/>
<dbReference type="KEGG" id="bta:317692"/>
<dbReference type="CTD" id="10396"/>
<dbReference type="eggNOG" id="KOG0206">
    <property type="taxonomic scope" value="Eukaryota"/>
</dbReference>
<dbReference type="InParanoid" id="Q29449"/>
<dbReference type="OrthoDB" id="377733at2759"/>
<dbReference type="BRENDA" id="7.6.2.1">
    <property type="organism ID" value="908"/>
</dbReference>
<dbReference type="Proteomes" id="UP000009136">
    <property type="component" value="Unplaced"/>
</dbReference>
<dbReference type="GO" id="GO:0042584">
    <property type="term" value="C:chromaffin granule membrane"/>
    <property type="evidence" value="ECO:0007669"/>
    <property type="project" value="UniProtKB-SubCell"/>
</dbReference>
<dbReference type="GO" id="GO:0031410">
    <property type="term" value="C:cytoplasmic vesicle"/>
    <property type="evidence" value="ECO:0000250"/>
    <property type="project" value="UniProtKB"/>
</dbReference>
<dbReference type="GO" id="GO:0005783">
    <property type="term" value="C:endoplasmic reticulum"/>
    <property type="evidence" value="ECO:0007669"/>
    <property type="project" value="UniProtKB-SubCell"/>
</dbReference>
<dbReference type="GO" id="GO:0031090">
    <property type="term" value="C:organelle membrane"/>
    <property type="evidence" value="ECO:0000250"/>
    <property type="project" value="UniProtKB"/>
</dbReference>
<dbReference type="GO" id="GO:1990531">
    <property type="term" value="C:phospholipid-translocating ATPase complex"/>
    <property type="evidence" value="ECO:0000250"/>
    <property type="project" value="UniProtKB"/>
</dbReference>
<dbReference type="GO" id="GO:0005886">
    <property type="term" value="C:plasma membrane"/>
    <property type="evidence" value="ECO:0000318"/>
    <property type="project" value="GO_Central"/>
</dbReference>
<dbReference type="GO" id="GO:0005802">
    <property type="term" value="C:trans-Golgi network"/>
    <property type="evidence" value="ECO:0000318"/>
    <property type="project" value="GO_Central"/>
</dbReference>
<dbReference type="GO" id="GO:0005524">
    <property type="term" value="F:ATP binding"/>
    <property type="evidence" value="ECO:0007669"/>
    <property type="project" value="UniProtKB-KW"/>
</dbReference>
<dbReference type="GO" id="GO:0016887">
    <property type="term" value="F:ATP hydrolysis activity"/>
    <property type="evidence" value="ECO:0007669"/>
    <property type="project" value="InterPro"/>
</dbReference>
<dbReference type="GO" id="GO:0140326">
    <property type="term" value="F:ATPase-coupled intramembrane lipid transporter activity"/>
    <property type="evidence" value="ECO:0000318"/>
    <property type="project" value="GO_Central"/>
</dbReference>
<dbReference type="GO" id="GO:0000287">
    <property type="term" value="F:magnesium ion binding"/>
    <property type="evidence" value="ECO:0007669"/>
    <property type="project" value="InterPro"/>
</dbReference>
<dbReference type="GO" id="GO:0140346">
    <property type="term" value="F:phosphatidylserine flippase activity"/>
    <property type="evidence" value="ECO:0000250"/>
    <property type="project" value="UniProtKB"/>
</dbReference>
<dbReference type="GO" id="GO:0090556">
    <property type="term" value="F:phosphatidylserine floppase activity"/>
    <property type="evidence" value="ECO:0007669"/>
    <property type="project" value="RHEA"/>
</dbReference>
<dbReference type="GO" id="GO:0140331">
    <property type="term" value="P:aminophospholipid translocation"/>
    <property type="evidence" value="ECO:0000250"/>
    <property type="project" value="UniProtKB"/>
</dbReference>
<dbReference type="GO" id="GO:0045332">
    <property type="term" value="P:phospholipid translocation"/>
    <property type="evidence" value="ECO:0000318"/>
    <property type="project" value="GO_Central"/>
</dbReference>
<dbReference type="CDD" id="cd02073">
    <property type="entry name" value="P-type_ATPase_APLT_Dnf-like"/>
    <property type="match status" value="1"/>
</dbReference>
<dbReference type="FunFam" id="2.70.150.10:FF:000021">
    <property type="entry name" value="Phospholipid-transporting ATPase"/>
    <property type="match status" value="1"/>
</dbReference>
<dbReference type="FunFam" id="3.40.1110.10:FF:000010">
    <property type="entry name" value="Phospholipid-transporting ATPase"/>
    <property type="match status" value="1"/>
</dbReference>
<dbReference type="FunFam" id="3.40.50.1000:FF:000010">
    <property type="entry name" value="Phospholipid-transporting ATPase"/>
    <property type="match status" value="1"/>
</dbReference>
<dbReference type="Gene3D" id="3.40.1110.10">
    <property type="entry name" value="Calcium-transporting ATPase, cytoplasmic domain N"/>
    <property type="match status" value="1"/>
</dbReference>
<dbReference type="Gene3D" id="2.70.150.10">
    <property type="entry name" value="Calcium-transporting ATPase, cytoplasmic transduction domain A"/>
    <property type="match status" value="1"/>
</dbReference>
<dbReference type="Gene3D" id="3.40.50.1000">
    <property type="entry name" value="HAD superfamily/HAD-like"/>
    <property type="match status" value="1"/>
</dbReference>
<dbReference type="InterPro" id="IPR023299">
    <property type="entry name" value="ATPase_P-typ_cyto_dom_N"/>
</dbReference>
<dbReference type="InterPro" id="IPR018303">
    <property type="entry name" value="ATPase_P-typ_P_site"/>
</dbReference>
<dbReference type="InterPro" id="IPR023298">
    <property type="entry name" value="ATPase_P-typ_TM_dom_sf"/>
</dbReference>
<dbReference type="InterPro" id="IPR008250">
    <property type="entry name" value="ATPase_P-typ_transduc_dom_A_sf"/>
</dbReference>
<dbReference type="InterPro" id="IPR036412">
    <property type="entry name" value="HAD-like_sf"/>
</dbReference>
<dbReference type="InterPro" id="IPR023214">
    <property type="entry name" value="HAD_sf"/>
</dbReference>
<dbReference type="InterPro" id="IPR006539">
    <property type="entry name" value="P-type_ATPase_IV"/>
</dbReference>
<dbReference type="InterPro" id="IPR032631">
    <property type="entry name" value="P-type_ATPase_N"/>
</dbReference>
<dbReference type="InterPro" id="IPR001757">
    <property type="entry name" value="P_typ_ATPase"/>
</dbReference>
<dbReference type="InterPro" id="IPR032630">
    <property type="entry name" value="P_typ_ATPase_c"/>
</dbReference>
<dbReference type="InterPro" id="IPR044492">
    <property type="entry name" value="P_typ_ATPase_HD_dom"/>
</dbReference>
<dbReference type="NCBIfam" id="TIGR01652">
    <property type="entry name" value="ATPase-Plipid"/>
    <property type="match status" value="1"/>
</dbReference>
<dbReference type="NCBIfam" id="TIGR01494">
    <property type="entry name" value="ATPase_P-type"/>
    <property type="match status" value="2"/>
</dbReference>
<dbReference type="PANTHER" id="PTHR24092:SF221">
    <property type="entry name" value="PHOSPHOLIPID-TRANSPORTING ATPASE IA"/>
    <property type="match status" value="1"/>
</dbReference>
<dbReference type="PANTHER" id="PTHR24092">
    <property type="entry name" value="PROBABLE PHOSPHOLIPID-TRANSPORTING ATPASE"/>
    <property type="match status" value="1"/>
</dbReference>
<dbReference type="Pfam" id="PF13246">
    <property type="entry name" value="Cation_ATPase"/>
    <property type="match status" value="1"/>
</dbReference>
<dbReference type="Pfam" id="PF00122">
    <property type="entry name" value="E1-E2_ATPase"/>
    <property type="match status" value="1"/>
</dbReference>
<dbReference type="Pfam" id="PF16212">
    <property type="entry name" value="PhoLip_ATPase_C"/>
    <property type="match status" value="1"/>
</dbReference>
<dbReference type="Pfam" id="PF16209">
    <property type="entry name" value="PhoLip_ATPase_N"/>
    <property type="match status" value="1"/>
</dbReference>
<dbReference type="PRINTS" id="PR00119">
    <property type="entry name" value="CATATPASE"/>
</dbReference>
<dbReference type="SFLD" id="SFLDS00003">
    <property type="entry name" value="Haloacid_Dehalogenase"/>
    <property type="match status" value="1"/>
</dbReference>
<dbReference type="SFLD" id="SFLDF00027">
    <property type="entry name" value="p-type_atpase"/>
    <property type="match status" value="1"/>
</dbReference>
<dbReference type="SUPFAM" id="SSF81653">
    <property type="entry name" value="Calcium ATPase, transduction domain A"/>
    <property type="match status" value="1"/>
</dbReference>
<dbReference type="SUPFAM" id="SSF81665">
    <property type="entry name" value="Calcium ATPase, transmembrane domain M"/>
    <property type="match status" value="1"/>
</dbReference>
<dbReference type="SUPFAM" id="SSF56784">
    <property type="entry name" value="HAD-like"/>
    <property type="match status" value="1"/>
</dbReference>
<dbReference type="SUPFAM" id="SSF81660">
    <property type="entry name" value="Metal cation-transporting ATPase, ATP-binding domain N"/>
    <property type="match status" value="1"/>
</dbReference>
<dbReference type="PROSITE" id="PS00154">
    <property type="entry name" value="ATPASE_E1_E2"/>
    <property type="match status" value="1"/>
</dbReference>
<name>AT8A1_BOVIN</name>
<gene>
    <name evidence="5" type="primary">ATP8A1</name>
</gene>
<accession>Q29449</accession>
<sequence length="1149" mass="130026">MPTMRRTVSEIRSRAEGYEKTDDVSEKTSLADQEEIRTIFINQPQLTKFCNNHVSTAKYNIITFLPRFLYSQFRRAANSFFLFIALLQQIPDVSPTGRYTTLVPLLFILAVAAIKEIIEDIKRHKADNAVNKKQTQVLRNGAWEIVHWEKVNVGDIVIIKGKEYIPADTVLLSSSEPQAMCYIETSNLDGETNLKIRQGLPATSDIKDIDSLMRLSGRIECESPNRHLYDFVGNIRLDGRSTVPLGADQILLRGAQLRNTQWVHGIVVYTGHDTKLMQNSTSPPLKLSNVERITNVQILILFCILIAMSLVCSVGSAIWNRRHSGRDWYLNLNYGGANNFGLNFLTFIILFNNLIPISLLVTLEVVKFTQAYFINWDLDMHYEPTDTAAMARTSNLNVELGQVKYIFSDKTGTLTCNVMQFKKCTIAGVAYGQNSQFGDEKTFSDSSLLENLQNNHPTAPIICEFLTMMAVCHTAVPEREGDKIIYQAASPDEGALVRAAKQLNFVFTGRTPDSVIIDSLGQEERYELLNVLEFTSARKRMSVIVRTPSGKLRLYCKGADTVIYDRLAETSKYKEITLKHLEQFATEGLRTLCFAVAEISESDFQEWRAVYHRASTSVQNRLLKLEESYELIEKNLQLLGATAIEDKLQDQVPETIETLMKADIKIWILTGDKQETAINIGHSCKLRRKNMGMIVINEGSLDGTRETLSRHCTTLGDALRKENDFALIIDGKTLKYALTFGVRQYFLDLALSCKAVICCRVSPLQKSEVVEMVKKQVKVITLAIGDGANDVSMIQTAHVGVGISGNEGLQAANSSDYSIAQFKYLKNLLMVHGAWNYNRGSKCILYCFYKNIVLYIIEIWFAFVNGFSGQILFERWCIGLYNVMFTAMPPLTLGIFERSCRKEYMLKYPELYKTSQNALDFNTKVFWVHCLNGLFHSVILFWFPLKALQYGTVFENGRTSDYLLLGNFVYTFVVITVCLKAGLETSYWTWFSHIAIWGSIALWVVFFGIYSSLWPAVPMAPDMSGEAAMLFSSGVFWMGLLFIPVASLLLDVVYKVIKRTAFKTLVDEVQELEAKSQDPGAVVLGKSLTERAQLLKNVFKKNHVNLYRSESLQQNLLHGYAFSQDENGIVSQSEVIRAYDTTKQRPDEW</sequence>
<protein>
    <recommendedName>
        <fullName evidence="7">Probable phospholipid-transporting ATPase IA</fullName>
        <ecNumber evidence="3">7.6.2.1</ecNumber>
    </recommendedName>
    <alternativeName>
        <fullName>ATPase class I type 8A member 1</fullName>
    </alternativeName>
    <alternativeName>
        <fullName>Chromaffin granule ATPase II</fullName>
    </alternativeName>
</protein>
<organism>
    <name type="scientific">Bos taurus</name>
    <name type="common">Bovine</name>
    <dbReference type="NCBI Taxonomy" id="9913"/>
    <lineage>
        <taxon>Eukaryota</taxon>
        <taxon>Metazoa</taxon>
        <taxon>Chordata</taxon>
        <taxon>Craniata</taxon>
        <taxon>Vertebrata</taxon>
        <taxon>Euteleostomi</taxon>
        <taxon>Mammalia</taxon>
        <taxon>Eutheria</taxon>
        <taxon>Laurasiatheria</taxon>
        <taxon>Artiodactyla</taxon>
        <taxon>Ruminantia</taxon>
        <taxon>Pecora</taxon>
        <taxon>Bovidae</taxon>
        <taxon>Bovinae</taxon>
        <taxon>Bos</taxon>
    </lineage>
</organism>
<comment type="function">
    <text evidence="3 5">Catalytic component of a P4-ATPase flippase complex which catalyzes the hydrolysis of ATP coupled to the transport of aminophospholipids from the outer to the inner leaflet of various membranes and ensures the maintenance of asymmetric distribution of phospholipids (By similarity). Phospholipid translocation also seems to be implicated in vesicle formation and in uptake of lipid signaling molecules. In vitro, its ATPase activity is selectively and stereospecifically stimulated by phosphatidylserine (PS) (By similarity). The flippase complex ATP8A1:TMEM30A seems to play a role in regulation of cell migration probably involving flippase-mediated translocation of phosphatidylethanolamine (PE) at the cell membrane (By similarity). Acts as aminophospholipid translocase at the cell membrane in neuronal cells (By similarity).</text>
</comment>
<comment type="catalytic activity">
    <reaction evidence="5">
        <text>ATP + H2O + phospholipidSide 1 = ADP + phosphate + phospholipidSide 2.</text>
        <dbReference type="EC" id="7.6.2.1"/>
    </reaction>
</comment>
<comment type="catalytic activity">
    <reaction evidence="5">
        <text>a 1,2-diacyl-sn-glycero-3-phospho-L-serine(out) + ATP + H2O = a 1,2-diacyl-sn-glycero-3-phospho-L-serine(in) + ADP + phosphate + H(+)</text>
        <dbReference type="Rhea" id="RHEA:38567"/>
        <dbReference type="ChEBI" id="CHEBI:15377"/>
        <dbReference type="ChEBI" id="CHEBI:15378"/>
        <dbReference type="ChEBI" id="CHEBI:30616"/>
        <dbReference type="ChEBI" id="CHEBI:43474"/>
        <dbReference type="ChEBI" id="CHEBI:57262"/>
        <dbReference type="ChEBI" id="CHEBI:456216"/>
    </reaction>
    <physiologicalReaction direction="left-to-right" evidence="5">
        <dbReference type="Rhea" id="RHEA:38568"/>
    </physiologicalReaction>
</comment>
<comment type="cofactor">
    <cofactor evidence="5">
        <name>Mg(2+)</name>
        <dbReference type="ChEBI" id="CHEBI:18420"/>
    </cofactor>
</comment>
<comment type="subunit">
    <text evidence="5">Component of a P4-ATPase flippase complex which consists of a catalytic alpha subunit and an accessory beta subunit. Interacts with TMEM30A to form a flippase complex; this complex forms an intermediate phosphoenzyme. Interacts with TMEM30B; this interaction is reported conflictingly.</text>
</comment>
<comment type="subcellular location">
    <subcellularLocation>
        <location evidence="3">Cytoplasmic vesicle</location>
        <location evidence="3">Secretory vesicle</location>
        <location evidence="3">Chromaffin granule membrane</location>
        <topology evidence="3">Multi-pass membrane protein</topology>
    </subcellularLocation>
    <subcellularLocation>
        <location evidence="5">Cytoplasmic granule</location>
    </subcellularLocation>
    <subcellularLocation>
        <location evidence="5">Cell membrane</location>
    </subcellularLocation>
    <subcellularLocation>
        <location evidence="5">Endoplasmic reticulum</location>
    </subcellularLocation>
    <subcellularLocation>
        <location evidence="5">Golgi apparatus</location>
    </subcellularLocation>
    <text evidence="3 5">Exit from the endoplasmic reticulum requires the presence of TMEM30A, but not TMEM30B. In the presence of TMEM30A, predominantly located in cytoplasmic punctate structures and localizes to the cell membrane (By similarity). Localizes to plasma membranes of red blood cells (By similarity).</text>
</comment>
<comment type="tissue specificity">
    <text>Kidney.</text>
</comment>
<comment type="PTM">
    <text evidence="5">Cleaved by calpain in a caspase- and calcium influx-dependent manner during platelet apoptosis leading to a 100 kDa polypeptide.</text>
</comment>
<comment type="similarity">
    <text evidence="7">Belongs to the cation transport ATPase (P-type) (TC 3.A.3) family. Type IV subfamily.</text>
</comment>
<evidence type="ECO:0000250" key="1">
    <source>
        <dbReference type="UniProtKB" id="C7EXK4"/>
    </source>
</evidence>
<evidence type="ECO:0000250" key="2">
    <source>
        <dbReference type="UniProtKB" id="P04191"/>
    </source>
</evidence>
<evidence type="ECO:0000250" key="3">
    <source>
        <dbReference type="UniProtKB" id="P70704"/>
    </source>
</evidence>
<evidence type="ECO:0000250" key="4">
    <source>
        <dbReference type="UniProtKB" id="Q8NB49"/>
    </source>
</evidence>
<evidence type="ECO:0000250" key="5">
    <source>
        <dbReference type="UniProtKB" id="Q9Y2Q0"/>
    </source>
</evidence>
<evidence type="ECO:0000255" key="6"/>
<evidence type="ECO:0000305" key="7"/>
<proteinExistence type="evidence at protein level"/>
<keyword id="KW-0067">ATP-binding</keyword>
<keyword id="KW-1003">Cell membrane</keyword>
<keyword id="KW-0968">Cytoplasmic vesicle</keyword>
<keyword id="KW-0903">Direct protein sequencing</keyword>
<keyword id="KW-0256">Endoplasmic reticulum</keyword>
<keyword id="KW-0333">Golgi apparatus</keyword>
<keyword id="KW-0460">Magnesium</keyword>
<keyword id="KW-0472">Membrane</keyword>
<keyword id="KW-0479">Metal-binding</keyword>
<keyword id="KW-0547">Nucleotide-binding</keyword>
<keyword id="KW-0597">Phosphoprotein</keyword>
<keyword id="KW-1185">Reference proteome</keyword>
<keyword id="KW-1278">Translocase</keyword>
<keyword id="KW-0812">Transmembrane</keyword>
<keyword id="KW-1133">Transmembrane helix</keyword>
<feature type="chain" id="PRO_0000046359" description="Probable phospholipid-transporting ATPase IA">
    <location>
        <begin position="1"/>
        <end position="1149"/>
    </location>
</feature>
<feature type="topological domain" description="Cytoplasmic" evidence="6">
    <location>
        <begin position="1"/>
        <end position="65"/>
    </location>
</feature>
<feature type="transmembrane region" description="Helical" evidence="6">
    <location>
        <begin position="66"/>
        <end position="86"/>
    </location>
</feature>
<feature type="topological domain" description="Extracellular" evidence="6">
    <location>
        <begin position="87"/>
        <end position="92"/>
    </location>
</feature>
<feature type="transmembrane region" description="Helical" evidence="6">
    <location>
        <begin position="93"/>
        <end position="115"/>
    </location>
</feature>
<feature type="topological domain" description="Cytoplasmic" evidence="6">
    <location>
        <begin position="116"/>
        <end position="297"/>
    </location>
</feature>
<feature type="transmembrane region" description="Helical" evidence="6">
    <location>
        <begin position="298"/>
        <end position="319"/>
    </location>
</feature>
<feature type="topological domain" description="Extracellular" evidence="6">
    <location>
        <begin position="320"/>
        <end position="344"/>
    </location>
</feature>
<feature type="transmembrane region" description="Helical" evidence="6">
    <location>
        <begin position="345"/>
        <end position="366"/>
    </location>
</feature>
<feature type="topological domain" description="Cytoplasmic" evidence="6">
    <location>
        <begin position="367"/>
        <end position="842"/>
    </location>
</feature>
<feature type="transmembrane region" description="Helical" evidence="6">
    <location>
        <begin position="843"/>
        <end position="863"/>
    </location>
</feature>
<feature type="topological domain" description="Extracellular" evidence="6">
    <location>
        <begin position="864"/>
        <end position="875"/>
    </location>
</feature>
<feature type="transmembrane region" description="Helical" evidence="6">
    <location>
        <begin position="876"/>
        <end position="895"/>
    </location>
</feature>
<feature type="topological domain" description="Cytoplasmic" evidence="6">
    <location>
        <begin position="896"/>
        <end position="925"/>
    </location>
</feature>
<feature type="transmembrane region" description="Helical" evidence="6">
    <location>
        <begin position="926"/>
        <end position="947"/>
    </location>
</feature>
<feature type="topological domain" description="Extracellular" evidence="6">
    <location>
        <begin position="948"/>
        <end position="961"/>
    </location>
</feature>
<feature type="transmembrane region" description="Helical" evidence="6">
    <location>
        <begin position="962"/>
        <end position="984"/>
    </location>
</feature>
<feature type="topological domain" description="Cytoplasmic" evidence="6">
    <location>
        <begin position="985"/>
        <end position="990"/>
    </location>
</feature>
<feature type="transmembrane region" description="Helical" evidence="6">
    <location>
        <begin position="991"/>
        <end position="1011"/>
    </location>
</feature>
<feature type="topological domain" description="Extracellular" evidence="6">
    <location>
        <begin position="1012"/>
        <end position="1029"/>
    </location>
</feature>
<feature type="transmembrane region" description="Helical" evidence="6">
    <location>
        <begin position="1030"/>
        <end position="1055"/>
    </location>
</feature>
<feature type="topological domain" description="Cytoplasmic" evidence="6">
    <location>
        <begin position="1056"/>
        <end position="1149"/>
    </location>
</feature>
<feature type="active site" description="4-aspartylphosphate intermediate" evidence="5">
    <location>
        <position position="409"/>
    </location>
</feature>
<feature type="binding site" evidence="5">
    <location>
        <position position="409"/>
    </location>
    <ligand>
        <name>ATP</name>
        <dbReference type="ChEBI" id="CHEBI:30616"/>
    </ligand>
</feature>
<feature type="binding site" evidence="5">
    <location>
        <position position="409"/>
    </location>
    <ligand>
        <name>Mg(2+)</name>
        <dbReference type="ChEBI" id="CHEBI:18420"/>
    </ligand>
</feature>
<feature type="binding site" evidence="5">
    <location>
        <position position="410"/>
    </location>
    <ligand>
        <name>ATP</name>
        <dbReference type="ChEBI" id="CHEBI:30616"/>
    </ligand>
</feature>
<feature type="binding site" evidence="2">
    <location>
        <position position="411"/>
    </location>
    <ligand>
        <name>ATP</name>
        <dbReference type="ChEBI" id="CHEBI:30616"/>
    </ligand>
</feature>
<feature type="binding site" evidence="5">
    <location>
        <position position="411"/>
    </location>
    <ligand>
        <name>Mg(2+)</name>
        <dbReference type="ChEBI" id="CHEBI:18420"/>
    </ligand>
</feature>
<feature type="binding site" evidence="2">
    <location>
        <position position="493"/>
    </location>
    <ligand>
        <name>ATP</name>
        <dbReference type="ChEBI" id="CHEBI:30616"/>
    </ligand>
</feature>
<feature type="binding site" evidence="5">
    <location>
        <position position="534"/>
    </location>
    <ligand>
        <name>ATP</name>
        <dbReference type="ChEBI" id="CHEBI:30616"/>
    </ligand>
</feature>
<feature type="binding site" evidence="2">
    <location>
        <position position="557"/>
    </location>
    <ligand>
        <name>ATP</name>
        <dbReference type="ChEBI" id="CHEBI:30616"/>
    </ligand>
</feature>
<feature type="binding site" evidence="2">
    <location>
        <position position="590"/>
    </location>
    <ligand>
        <name>ATP</name>
        <dbReference type="ChEBI" id="CHEBI:30616"/>
    </ligand>
</feature>
<feature type="binding site" evidence="2">
    <location>
        <position position="670"/>
    </location>
    <ligand>
        <name>ATP</name>
        <dbReference type="ChEBI" id="CHEBI:30616"/>
    </ligand>
</feature>
<feature type="binding site" evidence="2">
    <location>
        <position position="671"/>
    </location>
    <ligand>
        <name>ATP</name>
        <dbReference type="ChEBI" id="CHEBI:30616"/>
    </ligand>
</feature>
<feature type="binding site" evidence="2">
    <location>
        <position position="672"/>
    </location>
    <ligand>
        <name>ATP</name>
        <dbReference type="ChEBI" id="CHEBI:30616"/>
    </ligand>
</feature>
<feature type="binding site" evidence="6">
    <location>
        <begin position="726"/>
        <end position="733"/>
    </location>
    <ligand>
        <name>ATP</name>
        <dbReference type="ChEBI" id="CHEBI:30616"/>
    </ligand>
</feature>
<feature type="binding site" evidence="2">
    <location>
        <position position="760"/>
    </location>
    <ligand>
        <name>ATP</name>
        <dbReference type="ChEBI" id="CHEBI:30616"/>
    </ligand>
</feature>
<feature type="binding site" evidence="2">
    <location>
        <position position="766"/>
    </location>
    <ligand>
        <name>ATP</name>
        <dbReference type="ChEBI" id="CHEBI:30616"/>
    </ligand>
</feature>
<feature type="binding site" evidence="5">
    <location>
        <position position="786"/>
    </location>
    <ligand>
        <name>Mg(2+)</name>
        <dbReference type="ChEBI" id="CHEBI:18420"/>
    </ligand>
</feature>
<feature type="binding site" evidence="5">
    <location>
        <position position="789"/>
    </location>
    <ligand>
        <name>ATP</name>
        <dbReference type="ChEBI" id="CHEBI:30616"/>
    </ligand>
</feature>
<feature type="binding site" evidence="5">
    <location>
        <position position="790"/>
    </location>
    <ligand>
        <name>ATP</name>
        <dbReference type="ChEBI" id="CHEBI:30616"/>
    </ligand>
</feature>
<feature type="binding site" evidence="4">
    <location>
        <position position="790"/>
    </location>
    <ligand>
        <name>Mg(2+)</name>
        <dbReference type="ChEBI" id="CHEBI:18420"/>
    </ligand>
</feature>
<feature type="binding site" evidence="6">
    <location>
        <begin position="1080"/>
        <end position="1087"/>
    </location>
    <ligand>
        <name>ATP</name>
        <dbReference type="ChEBI" id="CHEBI:30616"/>
    </ligand>
</feature>
<feature type="site" description="Involved in the recognition of the lipid substrate on the exoplasmic side" evidence="1">
    <location>
        <position position="352"/>
    </location>
</feature>
<feature type="site" description="Involved in the release of the transported lipid into the cytosolic leaflet" evidence="1">
    <location>
        <position position="357"/>
    </location>
</feature>
<feature type="modified residue" description="Phosphoserine" evidence="5">
    <location>
        <position position="25"/>
    </location>
</feature>
<feature type="modified residue" description="Phosphothreonine" evidence="3">
    <location>
        <position position="28"/>
    </location>
</feature>
<feature type="modified residue" description="Phosphoserine" evidence="3">
    <location>
        <position position="29"/>
    </location>
</feature>
<feature type="modified residue" description="Phosphoserine" evidence="3">
    <location>
        <position position="1111"/>
    </location>
</feature>